<organism>
    <name type="scientific">Bos taurus</name>
    <name type="common">Bovine</name>
    <dbReference type="NCBI Taxonomy" id="9913"/>
    <lineage>
        <taxon>Eukaryota</taxon>
        <taxon>Metazoa</taxon>
        <taxon>Chordata</taxon>
        <taxon>Craniata</taxon>
        <taxon>Vertebrata</taxon>
        <taxon>Euteleostomi</taxon>
        <taxon>Mammalia</taxon>
        <taxon>Eutheria</taxon>
        <taxon>Laurasiatheria</taxon>
        <taxon>Artiodactyla</taxon>
        <taxon>Ruminantia</taxon>
        <taxon>Pecora</taxon>
        <taxon>Bovidae</taxon>
        <taxon>Bovinae</taxon>
        <taxon>Bos</taxon>
    </lineage>
</organism>
<keyword id="KW-1003">Cell membrane</keyword>
<keyword id="KW-0963">Cytoplasm</keyword>
<keyword id="KW-0206">Cytoskeleton</keyword>
<keyword id="KW-1015">Disulfide bond</keyword>
<keyword id="KW-0325">Glycoprotein</keyword>
<keyword id="KW-0472">Membrane</keyword>
<keyword id="KW-1185">Reference proteome</keyword>
<keyword id="KW-0735">Signal-anchor</keyword>
<keyword id="KW-0812">Transmembrane</keyword>
<keyword id="KW-1133">Transmembrane helix</keyword>
<feature type="chain" id="PRO_0000285123" description="Gamma-sarcoglycan">
    <location>
        <begin position="1"/>
        <end position="291"/>
    </location>
</feature>
<feature type="transmembrane region" description="Helical; Signal-anchor for type II membrane protein" evidence="2">
    <location>
        <begin position="38"/>
        <end position="58"/>
    </location>
</feature>
<feature type="topological domain" description="Extracellular" evidence="2">
    <location>
        <begin position="59"/>
        <end position="291"/>
    </location>
</feature>
<feature type="glycosylation site" description="N-linked (GlcNAc...) asparagine" evidence="2">
    <location>
        <position position="110"/>
    </location>
</feature>
<feature type="disulfide bond" evidence="2">
    <location>
        <begin position="265"/>
        <end position="290"/>
    </location>
</feature>
<feature type="disulfide bond" evidence="2">
    <location>
        <begin position="267"/>
        <end position="283"/>
    </location>
</feature>
<reference key="1">
    <citation type="submission" date="2006-08" db="EMBL/GenBank/DDBJ databases">
        <authorList>
            <consortium name="NIH - Mammalian Gene Collection (MGC) project"/>
        </authorList>
    </citation>
    <scope>NUCLEOTIDE SEQUENCE [LARGE SCALE MRNA]</scope>
    <source>
        <strain>Hereford</strain>
        <tissue>Fetal muscle</tissue>
    </source>
</reference>
<proteinExistence type="evidence at transcript level"/>
<dbReference type="EMBL" id="BC119990">
    <property type="protein sequence ID" value="AAI19991.1"/>
    <property type="molecule type" value="mRNA"/>
</dbReference>
<dbReference type="RefSeq" id="NP_001068712.1">
    <property type="nucleotide sequence ID" value="NM_001075244.1"/>
</dbReference>
<dbReference type="RefSeq" id="XP_010809098.1">
    <property type="nucleotide sequence ID" value="XM_010810796.1"/>
</dbReference>
<dbReference type="RefSeq" id="XP_059747962.1">
    <property type="nucleotide sequence ID" value="XM_059891979.1"/>
</dbReference>
<dbReference type="RefSeq" id="XP_059747963.1">
    <property type="nucleotide sequence ID" value="XM_059891980.1"/>
</dbReference>
<dbReference type="SMR" id="Q0VCU7"/>
<dbReference type="FunCoup" id="Q0VCU7">
    <property type="interactions" value="172"/>
</dbReference>
<dbReference type="STRING" id="9913.ENSBTAP00000002431"/>
<dbReference type="GlyCosmos" id="Q0VCU7">
    <property type="glycosylation" value="1 site, No reported glycans"/>
</dbReference>
<dbReference type="GlyGen" id="Q0VCU7">
    <property type="glycosylation" value="1 site"/>
</dbReference>
<dbReference type="PaxDb" id="9913-ENSBTAP00000002431"/>
<dbReference type="GeneID" id="506155"/>
<dbReference type="KEGG" id="bta:506155"/>
<dbReference type="CTD" id="6445"/>
<dbReference type="VEuPathDB" id="HostDB:ENSBTAG00000001865"/>
<dbReference type="eggNOG" id="KOG3950">
    <property type="taxonomic scope" value="Eukaryota"/>
</dbReference>
<dbReference type="HOGENOM" id="CLU_043450_0_0_1"/>
<dbReference type="InParanoid" id="Q0VCU7"/>
<dbReference type="OMA" id="VMWFSPV"/>
<dbReference type="OrthoDB" id="8881719at2759"/>
<dbReference type="TreeFam" id="TF313538"/>
<dbReference type="Reactome" id="R-BTA-9913351">
    <property type="pathway name" value="Formation of the dystrophin-glycoprotein complex (DGC)"/>
</dbReference>
<dbReference type="Proteomes" id="UP000009136">
    <property type="component" value="Chromosome 12"/>
</dbReference>
<dbReference type="Bgee" id="ENSBTAG00000001865">
    <property type="expression patterns" value="Expressed in laryngeal cartilage and 66 other cell types or tissues"/>
</dbReference>
<dbReference type="GO" id="GO:0005737">
    <property type="term" value="C:cytoplasm"/>
    <property type="evidence" value="ECO:0007669"/>
    <property type="project" value="UniProtKB-KW"/>
</dbReference>
<dbReference type="GO" id="GO:0005856">
    <property type="term" value="C:cytoskeleton"/>
    <property type="evidence" value="ECO:0007669"/>
    <property type="project" value="UniProtKB-SubCell"/>
</dbReference>
<dbReference type="GO" id="GO:0016012">
    <property type="term" value="C:sarcoglycan complex"/>
    <property type="evidence" value="ECO:0000318"/>
    <property type="project" value="GO_Central"/>
</dbReference>
<dbReference type="GO" id="GO:0042383">
    <property type="term" value="C:sarcolemma"/>
    <property type="evidence" value="ECO:0000318"/>
    <property type="project" value="GO_Central"/>
</dbReference>
<dbReference type="GO" id="GO:0048738">
    <property type="term" value="P:cardiac muscle tissue development"/>
    <property type="evidence" value="ECO:0000318"/>
    <property type="project" value="GO_Central"/>
</dbReference>
<dbReference type="GO" id="GO:0060047">
    <property type="term" value="P:heart contraction"/>
    <property type="evidence" value="ECO:0000318"/>
    <property type="project" value="GO_Central"/>
</dbReference>
<dbReference type="InterPro" id="IPR006875">
    <property type="entry name" value="Sarcoglycan"/>
</dbReference>
<dbReference type="InterPro" id="IPR039972">
    <property type="entry name" value="Sarcoglycan_gamma/delta/zeta"/>
</dbReference>
<dbReference type="PANTHER" id="PTHR12939:SF4">
    <property type="entry name" value="GAMMA-SARCOGLYCAN"/>
    <property type="match status" value="1"/>
</dbReference>
<dbReference type="PANTHER" id="PTHR12939">
    <property type="entry name" value="SARCOGLYCAN"/>
    <property type="match status" value="1"/>
</dbReference>
<dbReference type="Pfam" id="PF04790">
    <property type="entry name" value="Sarcoglycan_1"/>
    <property type="match status" value="1"/>
</dbReference>
<accession>Q0VCU7</accession>
<name>SGCG_BOVIN</name>
<sequence>MVREQYTTITEGTHIERPENQAVYKIGIYGWRKRCLYLFVLLLLIVLLVNFALTIWILRVMWFSPVGMGHLHVTADGLHLEGESEFLFPLYVKEIRSRVDSSLLLQSTQNVTMNARNTEGEVTGRLKVGPQMVEVQSQQFQIHSKDGKPLFTVDEEKVMVGTDKLRVTGPEGALFEHSVETPLVRPDPPQDLRLESPTRSLSMDAPKGIHIQAPAGKIEALTQMDIVLQSSDGTVVLDAETVCLPELALGSQGPAGSSQGLYEVCVCPDGKLYLSVAGMGTTCHEHSHLCL</sequence>
<comment type="function">
    <text evidence="1">Component of the sarcoglycan complex, a subcomplex of the dystrophin-glycoprotein complex which forms a link between the F-actin cytoskeleton and the extracellular matrix.</text>
</comment>
<comment type="subunit">
    <text evidence="1">Interacts with the syntrophin SNTA1. Cross-link to form 2 major subcomplexes: one consisting of SGCB, SGCD and SGCG and the other consisting of SGCB and SGCD. The association between SGCB and SGCG is particularly strong while SGCA is loosely associated with the other sarcoglycans. Interacts with FLNC (By similarity).</text>
</comment>
<comment type="subcellular location">
    <subcellularLocation>
        <location evidence="1">Cell membrane</location>
        <location evidence="1">Sarcolemma</location>
        <topology evidence="1">Single-pass type II membrane protein</topology>
    </subcellularLocation>
    <subcellularLocation>
        <location evidence="1">Cytoplasm</location>
        <location evidence="1">Cytoskeleton</location>
    </subcellularLocation>
</comment>
<comment type="PTM">
    <text evidence="1">Disulfide bonds are present.</text>
</comment>
<comment type="similarity">
    <text evidence="3">Belongs to the sarcoglycan beta/delta/gamma/zeta family.</text>
</comment>
<evidence type="ECO:0000250" key="1"/>
<evidence type="ECO:0000255" key="2"/>
<evidence type="ECO:0000305" key="3"/>
<protein>
    <recommendedName>
        <fullName>Gamma-sarcoglycan</fullName>
        <shortName>Gamma-SG</shortName>
    </recommendedName>
</protein>
<gene>
    <name type="primary">SGCG</name>
</gene>